<accession>Q3YUU5</accession>
<name>UBIC_SHISS</name>
<evidence type="ECO:0000255" key="1">
    <source>
        <dbReference type="HAMAP-Rule" id="MF_01632"/>
    </source>
</evidence>
<evidence type="ECO:0000305" key="2"/>
<reference key="1">
    <citation type="journal article" date="2005" name="Nucleic Acids Res.">
        <title>Genome dynamics and diversity of Shigella species, the etiologic agents of bacillary dysentery.</title>
        <authorList>
            <person name="Yang F."/>
            <person name="Yang J."/>
            <person name="Zhang X."/>
            <person name="Chen L."/>
            <person name="Jiang Y."/>
            <person name="Yan Y."/>
            <person name="Tang X."/>
            <person name="Wang J."/>
            <person name="Xiong Z."/>
            <person name="Dong J."/>
            <person name="Xue Y."/>
            <person name="Zhu Y."/>
            <person name="Xu X."/>
            <person name="Sun L."/>
            <person name="Chen S."/>
            <person name="Nie H."/>
            <person name="Peng J."/>
            <person name="Xu J."/>
            <person name="Wang Y."/>
            <person name="Yuan Z."/>
            <person name="Wen Y."/>
            <person name="Yao Z."/>
            <person name="Shen Y."/>
            <person name="Qiang B."/>
            <person name="Hou Y."/>
            <person name="Yu J."/>
            <person name="Jin Q."/>
        </authorList>
    </citation>
    <scope>NUCLEOTIDE SEQUENCE [LARGE SCALE GENOMIC DNA]</scope>
    <source>
        <strain>Ss046</strain>
    </source>
</reference>
<dbReference type="EC" id="4.1.3.40" evidence="1"/>
<dbReference type="EMBL" id="CP000038">
    <property type="protein sequence ID" value="AAZ90717.1"/>
    <property type="status" value="ALT_INIT"/>
    <property type="molecule type" value="Genomic_DNA"/>
</dbReference>
<dbReference type="RefSeq" id="WP_005140732.1">
    <property type="nucleotide sequence ID" value="NC_007384.1"/>
</dbReference>
<dbReference type="SMR" id="Q3YUU5"/>
<dbReference type="GeneID" id="93777792"/>
<dbReference type="KEGG" id="ssn:SSON_4219"/>
<dbReference type="HOGENOM" id="CLU_096824_1_0_6"/>
<dbReference type="UniPathway" id="UPA00232"/>
<dbReference type="Proteomes" id="UP000002529">
    <property type="component" value="Chromosome"/>
</dbReference>
<dbReference type="GO" id="GO:0005829">
    <property type="term" value="C:cytosol"/>
    <property type="evidence" value="ECO:0007669"/>
    <property type="project" value="TreeGrafter"/>
</dbReference>
<dbReference type="GO" id="GO:0008813">
    <property type="term" value="F:chorismate lyase activity"/>
    <property type="evidence" value="ECO:0007669"/>
    <property type="project" value="UniProtKB-UniRule"/>
</dbReference>
<dbReference type="GO" id="GO:0042866">
    <property type="term" value="P:pyruvate biosynthetic process"/>
    <property type="evidence" value="ECO:0007669"/>
    <property type="project" value="UniProtKB-UniRule"/>
</dbReference>
<dbReference type="GO" id="GO:0006744">
    <property type="term" value="P:ubiquinone biosynthetic process"/>
    <property type="evidence" value="ECO:0007669"/>
    <property type="project" value="UniProtKB-UniRule"/>
</dbReference>
<dbReference type="FunFam" id="3.40.1410.10:FF:000002">
    <property type="entry name" value="Chorismate pyruvate-lyase"/>
    <property type="match status" value="1"/>
</dbReference>
<dbReference type="Gene3D" id="3.40.1410.10">
    <property type="entry name" value="Chorismate lyase-like"/>
    <property type="match status" value="1"/>
</dbReference>
<dbReference type="HAMAP" id="MF_01632">
    <property type="entry name" value="UbiC"/>
    <property type="match status" value="1"/>
</dbReference>
<dbReference type="InterPro" id="IPR007440">
    <property type="entry name" value="Chorismate--pyruvate_lyase"/>
</dbReference>
<dbReference type="InterPro" id="IPR028978">
    <property type="entry name" value="Chorismate_lyase_/UTRA_dom_sf"/>
</dbReference>
<dbReference type="NCBIfam" id="NF008656">
    <property type="entry name" value="PRK11655.1"/>
    <property type="match status" value="1"/>
</dbReference>
<dbReference type="PANTHER" id="PTHR38683">
    <property type="entry name" value="CHORISMATE PYRUVATE-LYASE"/>
    <property type="match status" value="1"/>
</dbReference>
<dbReference type="PANTHER" id="PTHR38683:SF1">
    <property type="entry name" value="CHORISMATE PYRUVATE-LYASE"/>
    <property type="match status" value="1"/>
</dbReference>
<dbReference type="Pfam" id="PF04345">
    <property type="entry name" value="Chor_lyase"/>
    <property type="match status" value="1"/>
</dbReference>
<dbReference type="SUPFAM" id="SSF64288">
    <property type="entry name" value="Chorismate lyase-like"/>
    <property type="match status" value="1"/>
</dbReference>
<protein>
    <recommendedName>
        <fullName evidence="1">Chorismate pyruvate-lyase</fullName>
        <shortName evidence="1">CL</shortName>
        <shortName evidence="1">CPL</shortName>
        <ecNumber evidence="1">4.1.3.40</ecNumber>
    </recommendedName>
</protein>
<organism>
    <name type="scientific">Shigella sonnei (strain Ss046)</name>
    <dbReference type="NCBI Taxonomy" id="300269"/>
    <lineage>
        <taxon>Bacteria</taxon>
        <taxon>Pseudomonadati</taxon>
        <taxon>Pseudomonadota</taxon>
        <taxon>Gammaproteobacteria</taxon>
        <taxon>Enterobacterales</taxon>
        <taxon>Enterobacteriaceae</taxon>
        <taxon>Shigella</taxon>
    </lineage>
</organism>
<sequence>MSHPALTQLRALRYFKEIPALDSQLLDWLLLEDSMTKRFEQQGKTVSVTMIREGFVEQNEIPEELPLLPKESRYWLREILLCADGEPWLAGRTVVPVSTLSGPELALQKLGKTPLGRYLFTSSTLTRDFIEIGRDAGLWGRRSRLRLSGKPLLLTELFLPASPLY</sequence>
<keyword id="KW-0963">Cytoplasm</keyword>
<keyword id="KW-0456">Lyase</keyword>
<keyword id="KW-0670">Pyruvate</keyword>
<keyword id="KW-1185">Reference proteome</keyword>
<keyword id="KW-0831">Ubiquinone biosynthesis</keyword>
<proteinExistence type="inferred from homology"/>
<feature type="chain" id="PRO_0000240576" description="Chorismate pyruvate-lyase">
    <location>
        <begin position="1"/>
        <end position="165"/>
    </location>
</feature>
<feature type="binding site" evidence="1">
    <location>
        <position position="35"/>
    </location>
    <ligand>
        <name>substrate</name>
    </ligand>
</feature>
<feature type="binding site" evidence="1">
    <location>
        <position position="77"/>
    </location>
    <ligand>
        <name>substrate</name>
    </ligand>
</feature>
<feature type="binding site" evidence="1">
    <location>
        <position position="115"/>
    </location>
    <ligand>
        <name>substrate</name>
    </ligand>
</feature>
<feature type="binding site" evidence="1">
    <location>
        <position position="156"/>
    </location>
    <ligand>
        <name>substrate</name>
    </ligand>
</feature>
<gene>
    <name evidence="1" type="primary">ubiC</name>
    <name type="ordered locus">SSON_4219</name>
</gene>
<comment type="function">
    <text evidence="1">Removes the pyruvyl group from chorismate, with concomitant aromatization of the ring, to provide 4-hydroxybenzoate (4HB) for the ubiquinone pathway.</text>
</comment>
<comment type="catalytic activity">
    <reaction evidence="1">
        <text>chorismate = 4-hydroxybenzoate + pyruvate</text>
        <dbReference type="Rhea" id="RHEA:16505"/>
        <dbReference type="ChEBI" id="CHEBI:15361"/>
        <dbReference type="ChEBI" id="CHEBI:17879"/>
        <dbReference type="ChEBI" id="CHEBI:29748"/>
        <dbReference type="EC" id="4.1.3.40"/>
    </reaction>
</comment>
<comment type="pathway">
    <text evidence="1">Cofactor biosynthesis; ubiquinone biosynthesis.</text>
</comment>
<comment type="subunit">
    <text evidence="1">Monomer.</text>
</comment>
<comment type="subcellular location">
    <subcellularLocation>
        <location evidence="1">Cytoplasm</location>
    </subcellularLocation>
</comment>
<comment type="similarity">
    <text evidence="1">Belongs to the UbiC family.</text>
</comment>
<comment type="sequence caution" evidence="2">
    <conflict type="erroneous initiation">
        <sequence resource="EMBL-CDS" id="AAZ90717"/>
    </conflict>
    <text>Extended N-terminus.</text>
</comment>